<protein>
    <recommendedName>
        <fullName>Uncharacterized protein MG141.1</fullName>
    </recommendedName>
</protein>
<sequence length="90" mass="10473">MQLITRLCLLTRKHFVKRELLRLVKLDNQLEIDLNQNLKGRGYYLSVFGLKLDKKHLKAVVEKHLKVSCNDAKLTAMITALQQLAQDEKK</sequence>
<keyword id="KW-1185">Reference proteome</keyword>
<reference key="1">
    <citation type="journal article" date="1995" name="Science">
        <title>The minimal gene complement of Mycoplasma genitalium.</title>
        <authorList>
            <person name="Fraser C.M."/>
            <person name="Gocayne J.D."/>
            <person name="White O."/>
            <person name="Adams M.D."/>
            <person name="Clayton R.A."/>
            <person name="Fleischmann R.D."/>
            <person name="Bult C.J."/>
            <person name="Kerlavage A.R."/>
            <person name="Sutton G.G."/>
            <person name="Kelley J.M."/>
            <person name="Fritchman J.L."/>
            <person name="Weidman J.F."/>
            <person name="Small K.V."/>
            <person name="Sandusky M."/>
            <person name="Fuhrmann J.L."/>
            <person name="Nguyen D.T."/>
            <person name="Utterback T.R."/>
            <person name="Saudek D.M."/>
            <person name="Phillips C.A."/>
            <person name="Merrick J.M."/>
            <person name="Tomb J.-F."/>
            <person name="Dougherty B.A."/>
            <person name="Bott K.F."/>
            <person name="Hu P.-C."/>
            <person name="Lucier T.S."/>
            <person name="Peterson S.N."/>
            <person name="Smith H.O."/>
            <person name="Hutchison C.A. III"/>
            <person name="Venter J.C."/>
        </authorList>
    </citation>
    <scope>NUCLEOTIDE SEQUENCE [LARGE SCALE GENOMIC DNA]</scope>
    <source>
        <strain>ATCC 33530 / DSM 19775 / NCTC 10195 / G37</strain>
    </source>
</reference>
<reference key="2">
    <citation type="submission" date="2005-09" db="EMBL/GenBank/DDBJ databases">
        <authorList>
            <person name="Fraser C.M."/>
            <person name="Gocayne J.D."/>
            <person name="White O."/>
            <person name="Adams M.D."/>
            <person name="Clayton R.A."/>
            <person name="Fleischmann R.D."/>
            <person name="Bult C.J."/>
            <person name="Kerlavage A.R."/>
            <person name="Sutton G.G."/>
            <person name="Kelley J.M."/>
            <person name="Fritchman J.L."/>
            <person name="Weidman J.F."/>
            <person name="Small K.V."/>
            <person name="Sandusky M."/>
            <person name="Fuhrmann J.L."/>
            <person name="Nguyen D.T."/>
            <person name="Utterback T.R."/>
            <person name="Saudek D.M."/>
            <person name="Phillips C.A."/>
            <person name="Merrick J.M."/>
            <person name="Tomb J.-F."/>
            <person name="Dougherty B.A."/>
            <person name="Bott K.F."/>
            <person name="Hu P.-C."/>
            <person name="Lucier T.S."/>
            <person name="Peterson S.N."/>
            <person name="Smith H.O."/>
            <person name="Hutchison C.A. III"/>
            <person name="Venter J.C."/>
        </authorList>
    </citation>
    <scope>IDENTIFICATION</scope>
</reference>
<organism>
    <name type="scientific">Mycoplasma genitalium (strain ATCC 33530 / DSM 19775 / NCTC 10195 / G37)</name>
    <name type="common">Mycoplasmoides genitalium</name>
    <dbReference type="NCBI Taxonomy" id="243273"/>
    <lineage>
        <taxon>Bacteria</taxon>
        <taxon>Bacillati</taxon>
        <taxon>Mycoplasmatota</taxon>
        <taxon>Mycoplasmoidales</taxon>
        <taxon>Mycoplasmoidaceae</taxon>
        <taxon>Mycoplasmoides</taxon>
    </lineage>
</organism>
<feature type="chain" id="PRO_0000234017" description="Uncharacterized protein MG141.1">
    <location>
        <begin position="1"/>
        <end position="90"/>
    </location>
</feature>
<dbReference type="EMBL" id="L43967">
    <property type="protein sequence ID" value="ABC59633.1"/>
    <property type="molecule type" value="Genomic_DNA"/>
</dbReference>
<dbReference type="RefSeq" id="WP_009885828.1">
    <property type="nucleotide sequence ID" value="NC_000908.2"/>
</dbReference>
<dbReference type="SMR" id="Q2MHT0"/>
<dbReference type="STRING" id="243273.MG_477"/>
<dbReference type="GeneID" id="88282273"/>
<dbReference type="KEGG" id="mge:MG_477"/>
<dbReference type="eggNOG" id="COG2740">
    <property type="taxonomic scope" value="Bacteria"/>
</dbReference>
<dbReference type="HOGENOM" id="CLU_2451449_0_0_14"/>
<dbReference type="InParanoid" id="Q2MHT0"/>
<dbReference type="OrthoDB" id="398624at2"/>
<dbReference type="BioCyc" id="MGEN243273:G1GJ2-164-MONOMER"/>
<dbReference type="Proteomes" id="UP000000807">
    <property type="component" value="Chromosome"/>
</dbReference>
<dbReference type="Gene3D" id="3.30.1230.10">
    <property type="entry name" value="YlxR-like"/>
    <property type="match status" value="1"/>
</dbReference>
<dbReference type="InterPro" id="IPR035931">
    <property type="entry name" value="YlxR-like_sf"/>
</dbReference>
<dbReference type="InterPro" id="IPR007393">
    <property type="entry name" value="YlxR_dom"/>
</dbReference>
<dbReference type="Pfam" id="PF04296">
    <property type="entry name" value="YlxR"/>
    <property type="match status" value="1"/>
</dbReference>
<dbReference type="SUPFAM" id="SSF64376">
    <property type="entry name" value="YlxR-like"/>
    <property type="match status" value="1"/>
</dbReference>
<name>Y141A_MYCGE</name>
<accession>Q2MHT0</accession>
<gene>
    <name type="ordered locus">MG141.1</name>
    <name type="ORF">MG_477</name>
</gene>
<proteinExistence type="predicted"/>